<name>BSAZ_BURP1</name>
<protein>
    <recommendedName>
        <fullName>Secretion apparatus protein BsaZ</fullName>
    </recommendedName>
</protein>
<feature type="chain" id="PRO_0000344016" description="Secretion apparatus protein BsaZ">
    <location>
        <begin position="1"/>
        <end position="411"/>
    </location>
</feature>
<feature type="transmembrane region" description="Helical" evidence="2">
    <location>
        <begin position="28"/>
        <end position="48"/>
    </location>
</feature>
<feature type="transmembrane region" description="Helical" evidence="2">
    <location>
        <begin position="80"/>
        <end position="100"/>
    </location>
</feature>
<feature type="transmembrane region" description="Helical" evidence="2">
    <location>
        <begin position="137"/>
        <end position="157"/>
    </location>
</feature>
<feature type="transmembrane region" description="Helical" evidence="2">
    <location>
        <begin position="175"/>
        <end position="195"/>
    </location>
</feature>
<feature type="region of interest" description="Disordered" evidence="3">
    <location>
        <begin position="341"/>
        <end position="411"/>
    </location>
</feature>
<feature type="compositionally biased region" description="Low complexity" evidence="3">
    <location>
        <begin position="370"/>
        <end position="404"/>
    </location>
</feature>
<evidence type="ECO:0000250" key="1"/>
<evidence type="ECO:0000255" key="2"/>
<evidence type="ECO:0000256" key="3">
    <source>
        <dbReference type="SAM" id="MobiDB-lite"/>
    </source>
</evidence>
<evidence type="ECO:0000305" key="4"/>
<gene>
    <name type="primary">bsaZ</name>
    <name type="ordered locus">BURPS1710b_A0573</name>
</gene>
<reference key="1">
    <citation type="journal article" date="2010" name="Genome Biol. Evol.">
        <title>Continuing evolution of Burkholderia mallei through genome reduction and large-scale rearrangements.</title>
        <authorList>
            <person name="Losada L."/>
            <person name="Ronning C.M."/>
            <person name="DeShazer D."/>
            <person name="Woods D."/>
            <person name="Fedorova N."/>
            <person name="Kim H.S."/>
            <person name="Shabalina S.A."/>
            <person name="Pearson T.R."/>
            <person name="Brinkac L."/>
            <person name="Tan P."/>
            <person name="Nandi T."/>
            <person name="Crabtree J."/>
            <person name="Badger J."/>
            <person name="Beckstrom-Sternberg S."/>
            <person name="Saqib M."/>
            <person name="Schutzer S.E."/>
            <person name="Keim P."/>
            <person name="Nierman W.C."/>
        </authorList>
    </citation>
    <scope>NUCLEOTIDE SEQUENCE [LARGE SCALE GENOMIC DNA]</scope>
    <source>
        <strain>1710b</strain>
    </source>
</reference>
<dbReference type="EMBL" id="CP000125">
    <property type="protein sequence ID" value="ABA52308.1"/>
    <property type="molecule type" value="Genomic_DNA"/>
</dbReference>
<dbReference type="RefSeq" id="WP_004528818.1">
    <property type="nucleotide sequence ID" value="NC_007435.1"/>
</dbReference>
<dbReference type="SMR" id="Q3JL20"/>
<dbReference type="MEROPS" id="N06.002"/>
<dbReference type="EnsemblBacteria" id="ABA52308">
    <property type="protein sequence ID" value="ABA52308"/>
    <property type="gene ID" value="BURPS1710b_A0573"/>
</dbReference>
<dbReference type="KEGG" id="bpm:BURPS1710b_A0573"/>
<dbReference type="HOGENOM" id="CLU_041013_1_3_4"/>
<dbReference type="Proteomes" id="UP000002700">
    <property type="component" value="Chromosome II"/>
</dbReference>
<dbReference type="GO" id="GO:0005886">
    <property type="term" value="C:plasma membrane"/>
    <property type="evidence" value="ECO:0007669"/>
    <property type="project" value="UniProtKB-SubCell"/>
</dbReference>
<dbReference type="GO" id="GO:0009306">
    <property type="term" value="P:protein secretion"/>
    <property type="evidence" value="ECO:0007669"/>
    <property type="project" value="InterPro"/>
</dbReference>
<dbReference type="Gene3D" id="6.10.250.2080">
    <property type="match status" value="1"/>
</dbReference>
<dbReference type="Gene3D" id="3.40.1690.10">
    <property type="entry name" value="secretion proteins EscU"/>
    <property type="match status" value="1"/>
</dbReference>
<dbReference type="InterPro" id="IPR006307">
    <property type="entry name" value="BsaZ-like"/>
</dbReference>
<dbReference type="InterPro" id="IPR006135">
    <property type="entry name" value="T3SS_substrate_exporter"/>
</dbReference>
<dbReference type="InterPro" id="IPR029025">
    <property type="entry name" value="T3SS_substrate_exporter_C"/>
</dbReference>
<dbReference type="NCBIfam" id="TIGR01404">
    <property type="entry name" value="FlhB_rel_III"/>
    <property type="match status" value="1"/>
</dbReference>
<dbReference type="NCBIfam" id="NF006017">
    <property type="entry name" value="PRK08156.1"/>
    <property type="match status" value="1"/>
</dbReference>
<dbReference type="PANTHER" id="PTHR30531">
    <property type="entry name" value="FLAGELLAR BIOSYNTHETIC PROTEIN FLHB"/>
    <property type="match status" value="1"/>
</dbReference>
<dbReference type="PANTHER" id="PTHR30531:SF14">
    <property type="entry name" value="SURFACE PRESENTATION OF ANTIGENS PROTEIN SPAS"/>
    <property type="match status" value="1"/>
</dbReference>
<dbReference type="Pfam" id="PF01312">
    <property type="entry name" value="Bac_export_2"/>
    <property type="match status" value="1"/>
</dbReference>
<dbReference type="PRINTS" id="PR00950">
    <property type="entry name" value="TYPE3IMSPROT"/>
</dbReference>
<dbReference type="SUPFAM" id="SSF160544">
    <property type="entry name" value="EscU C-terminal domain-like"/>
    <property type="match status" value="1"/>
</dbReference>
<comment type="function">
    <text evidence="1">Part of the bsa type III secretion system, is involved in the intracellular replication of invading bacteria inside the host cell. Probably necessary for the lysis of the vacuole membrane and escape into the host cell cytoplasm (By similarity).</text>
</comment>
<comment type="subcellular location">
    <subcellularLocation>
        <location evidence="4">Cell membrane</location>
        <topology evidence="4">Multi-pass membrane protein</topology>
    </subcellularLocation>
</comment>
<comment type="similarity">
    <text evidence="4">Belongs to the type III secretion exporter family.</text>
</comment>
<organism>
    <name type="scientific">Burkholderia pseudomallei (strain 1710b)</name>
    <dbReference type="NCBI Taxonomy" id="320372"/>
    <lineage>
        <taxon>Bacteria</taxon>
        <taxon>Pseudomonadati</taxon>
        <taxon>Pseudomonadota</taxon>
        <taxon>Betaproteobacteria</taxon>
        <taxon>Burkholderiales</taxon>
        <taxon>Burkholderiaceae</taxon>
        <taxon>Burkholderia</taxon>
        <taxon>pseudomallei group</taxon>
    </lineage>
</organism>
<sequence length="411" mass="44416">MAEKTEKPTAKKLRDAAKKGQTFKARDIVALIVIATGALAAPALVDLTRIAAEFVRIASTGAQPNPGAYAFAWAKLFLRIAAPFVLLCAAAGALPSLVQSRFTLAVESIRFDLTALDPVKGMKRLFSWRSAKDAVKALLYVGVFALTVRVFAGLYHADVFGLFRARPALLGHMWIVLTVRLVLLFLLCALPVLILDAAVEYFLYHRELKMDKHEVKQEYKESEGNHEIKSKRREIHQELLSEEIKANVEQSDFIVANPTHIAIGVYVNPDIVPIPFVSVRETNARALAVIRHAEACGVPVVRNVALARSIYRNSPRRYSFVSHDDIDGVMRVLIWLGEVEAANRGGPPPETRALTSAEPQARDGVAPPGDACADNAFPDDAPPGAAAPNAGSPDGPAPDGGAPARTGDQNA</sequence>
<accession>Q3JL20</accession>
<proteinExistence type="inferred from homology"/>
<keyword id="KW-1003">Cell membrane</keyword>
<keyword id="KW-0472">Membrane</keyword>
<keyword id="KW-0812">Transmembrane</keyword>
<keyword id="KW-1133">Transmembrane helix</keyword>
<keyword id="KW-0843">Virulence</keyword>